<name>UF71_DEIRA</name>
<reference key="1">
    <citation type="journal article" date="1999" name="Science">
        <title>Genome sequence of the radioresistant bacterium Deinococcus radiodurans R1.</title>
        <authorList>
            <person name="White O."/>
            <person name="Eisen J.A."/>
            <person name="Heidelberg J.F."/>
            <person name="Hickey E.K."/>
            <person name="Peterson J.D."/>
            <person name="Dodson R.J."/>
            <person name="Haft D.H."/>
            <person name="Gwinn M.L."/>
            <person name="Nelson W.C."/>
            <person name="Richardson D.L."/>
            <person name="Moffat K.S."/>
            <person name="Qin H."/>
            <person name="Jiang L."/>
            <person name="Pamphile W."/>
            <person name="Crosby M."/>
            <person name="Shen M."/>
            <person name="Vamathevan J.J."/>
            <person name="Lam P."/>
            <person name="McDonald L.A."/>
            <person name="Utterback T.R."/>
            <person name="Zalewski C."/>
            <person name="Makarova K.S."/>
            <person name="Aravind L."/>
            <person name="Daly M.J."/>
            <person name="Minton K.W."/>
            <person name="Fleischmann R.D."/>
            <person name="Ketchum K.A."/>
            <person name="Nelson K.E."/>
            <person name="Salzberg S.L."/>
            <person name="Smith H.O."/>
            <person name="Venter J.C."/>
            <person name="Fraser C.M."/>
        </authorList>
    </citation>
    <scope>NUCLEOTIDE SEQUENCE [LARGE SCALE GENOMIC DNA]</scope>
    <source>
        <strain>ATCC 13939 / DSM 20539 / JCM 16871 / CCUG 27074 / LMG 4051 / NBRC 15346 / NCIMB 9279 / VKM B-1422 / R1</strain>
    </source>
</reference>
<reference evidence="2" key="2">
    <citation type="submission" date="2003-05" db="UniProtKB">
        <authorList>
            <person name="Joshi B.S."/>
            <person name="Apte S.K."/>
            <person name="Schmid R."/>
            <person name="Altendorf K."/>
        </authorList>
    </citation>
    <scope>PROTEIN SEQUENCE OF 19-34</scope>
    <source>
        <strain>ATCC 13939 / DSM 20539 / JCM 16871 / CCUG 27074 / LMG 4051 / NBRC 15346 / NCIMB 9279 / VKM B-1422 / R1</strain>
    </source>
</reference>
<comment type="function">
    <text>Probably part of a binding-protein-dependent transport system.</text>
</comment>
<comment type="similarity">
    <text evidence="2">Belongs to the bacterial solute-binding protein 5 family.</text>
</comment>
<evidence type="ECO:0000269" key="1">
    <source ref="2"/>
</evidence>
<evidence type="ECO:0000305" key="2"/>
<dbReference type="EMBL" id="AE000513">
    <property type="protein sequence ID" value="AAF11135.1"/>
    <property type="molecule type" value="Genomic_DNA"/>
</dbReference>
<dbReference type="PIR" id="A75379">
    <property type="entry name" value="A75379"/>
</dbReference>
<dbReference type="RefSeq" id="NP_295294.1">
    <property type="nucleotide sequence ID" value="NC_001263.1"/>
</dbReference>
<dbReference type="RefSeq" id="WP_010888210.1">
    <property type="nucleotide sequence ID" value="NC_001263.1"/>
</dbReference>
<dbReference type="SMR" id="Q9RU24"/>
<dbReference type="STRING" id="243230.DR_1571"/>
<dbReference type="PaxDb" id="243230-DR_1571"/>
<dbReference type="EnsemblBacteria" id="AAF11135">
    <property type="protein sequence ID" value="AAF11135"/>
    <property type="gene ID" value="DR_1571"/>
</dbReference>
<dbReference type="GeneID" id="69517809"/>
<dbReference type="KEGG" id="dra:DR_1571"/>
<dbReference type="PATRIC" id="fig|243230.17.peg.1772"/>
<dbReference type="eggNOG" id="COG0747">
    <property type="taxonomic scope" value="Bacteria"/>
</dbReference>
<dbReference type="HOGENOM" id="CLU_017028_8_4_0"/>
<dbReference type="InParanoid" id="Q9RU24"/>
<dbReference type="OrthoDB" id="9796817at2"/>
<dbReference type="Proteomes" id="UP000002524">
    <property type="component" value="Chromosome 1"/>
</dbReference>
<dbReference type="GO" id="GO:0043190">
    <property type="term" value="C:ATP-binding cassette (ABC) transporter complex"/>
    <property type="evidence" value="ECO:0007669"/>
    <property type="project" value="InterPro"/>
</dbReference>
<dbReference type="GO" id="GO:0042597">
    <property type="term" value="C:periplasmic space"/>
    <property type="evidence" value="ECO:0007669"/>
    <property type="project" value="UniProtKB-ARBA"/>
</dbReference>
<dbReference type="GO" id="GO:1904680">
    <property type="term" value="F:peptide transmembrane transporter activity"/>
    <property type="evidence" value="ECO:0000318"/>
    <property type="project" value="GO_Central"/>
</dbReference>
<dbReference type="GO" id="GO:0015833">
    <property type="term" value="P:peptide transport"/>
    <property type="evidence" value="ECO:0000318"/>
    <property type="project" value="GO_Central"/>
</dbReference>
<dbReference type="CDD" id="cd08500">
    <property type="entry name" value="PBP2_NikA_DppA_OppA_like_4"/>
    <property type="match status" value="1"/>
</dbReference>
<dbReference type="FunFam" id="3.10.105.10:FF:000006">
    <property type="entry name" value="Peptide ABC transporter substrate-binding protein"/>
    <property type="match status" value="1"/>
</dbReference>
<dbReference type="Gene3D" id="3.90.76.10">
    <property type="entry name" value="Dipeptide-binding Protein, Domain 1"/>
    <property type="match status" value="1"/>
</dbReference>
<dbReference type="Gene3D" id="3.10.105.10">
    <property type="entry name" value="Dipeptide-binding Protein, Domain 3"/>
    <property type="match status" value="1"/>
</dbReference>
<dbReference type="Gene3D" id="3.40.190.10">
    <property type="entry name" value="Periplasmic binding protein-like II"/>
    <property type="match status" value="1"/>
</dbReference>
<dbReference type="InterPro" id="IPR030678">
    <property type="entry name" value="Peptide/Ni-bd"/>
</dbReference>
<dbReference type="InterPro" id="IPR039424">
    <property type="entry name" value="SBP_5"/>
</dbReference>
<dbReference type="InterPro" id="IPR023765">
    <property type="entry name" value="SBP_5_CS"/>
</dbReference>
<dbReference type="InterPro" id="IPR000914">
    <property type="entry name" value="SBP_5_dom"/>
</dbReference>
<dbReference type="PANTHER" id="PTHR30290:SF9">
    <property type="entry name" value="OLIGOPEPTIDE-BINDING PROTEIN APPA"/>
    <property type="match status" value="1"/>
</dbReference>
<dbReference type="PANTHER" id="PTHR30290">
    <property type="entry name" value="PERIPLASMIC BINDING COMPONENT OF ABC TRANSPORTER"/>
    <property type="match status" value="1"/>
</dbReference>
<dbReference type="Pfam" id="PF00496">
    <property type="entry name" value="SBP_bac_5"/>
    <property type="match status" value="1"/>
</dbReference>
<dbReference type="PIRSF" id="PIRSF002741">
    <property type="entry name" value="MppA"/>
    <property type="match status" value="1"/>
</dbReference>
<dbReference type="SUPFAM" id="SSF53850">
    <property type="entry name" value="Periplasmic binding protein-like II"/>
    <property type="match status" value="1"/>
</dbReference>
<dbReference type="PROSITE" id="PS01040">
    <property type="entry name" value="SBP_BACTERIAL_5"/>
    <property type="match status" value="1"/>
</dbReference>
<gene>
    <name type="ordered locus">DR_1571</name>
</gene>
<keyword id="KW-0903">Direct protein sequencing</keyword>
<keyword id="KW-1185">Reference proteome</keyword>
<keyword id="KW-0732">Signal</keyword>
<keyword id="KW-0813">Transport</keyword>
<sequence>MKKVMMLALALGASTSLAAPFVYPANWTSNKPGDVQTGGTFRSVNLQDFKTLNPFVSSESPNLPAVLSAGSLLGYNPVTGNYAPYMAEKYTQSADKRTFTFDIRKGMKWSDGKPITVDDWITAYTIDSNKDVGSNTFDYWTINNQPIKVTKVDSNTLKVVFPKADVTAIEFLSGIFLPQPTHVFMPVWKAKGAQGIKDMWTISTNPDNIVTSGPFMLDRYVRGERAILKKNPYFGEWNKDSAGKSLPYLDGIQINIVADANAQLAQFLAGNLDTYSPDNRDKLAQVKSAMDGGKVKGTLIPNASARASSDFMVFNMDDSATFKTKLFSNVKFRQAMSMLMNRDAMVDLALGGLGEPTYTSVYPVYKDWIPSGMDKYKFNPTAAAKLLAELGFTKKGSDGILVDKAGNKLEFTLITNAENNRRQSYAKVIQDEAKKVGVKINVSAIAFNQMTTLLDAKDNFGRRNFDAIIIGLTGGGQVYPVSGPSVVECKGLGDGGNLHMFNQSNKCRFPFETQAVNLFWKGRAEFDLAKRKAIAAQIQRNEMENQPYIQLAAQTVHFAWTDRVQGEYNRPQINSLNASTLFGPRDIALTWIKR</sequence>
<feature type="signal peptide" evidence="1">
    <location>
        <begin position="1"/>
        <end position="18"/>
    </location>
</feature>
<feature type="chain" id="PRO_0000031811" description="Probable ABC transporter-binding protein DR_1571">
    <location>
        <begin position="19"/>
        <end position="594"/>
    </location>
</feature>
<accession>Q9RU24</accession>
<proteinExistence type="evidence at protein level"/>
<organism>
    <name type="scientific">Deinococcus radiodurans (strain ATCC 13939 / DSM 20539 / JCM 16871 / CCUG 27074 / LMG 4051 / NBRC 15346 / NCIMB 9279 / VKM B-1422 / R1)</name>
    <dbReference type="NCBI Taxonomy" id="243230"/>
    <lineage>
        <taxon>Bacteria</taxon>
        <taxon>Thermotogati</taxon>
        <taxon>Deinococcota</taxon>
        <taxon>Deinococci</taxon>
        <taxon>Deinococcales</taxon>
        <taxon>Deinococcaceae</taxon>
        <taxon>Deinococcus</taxon>
    </lineage>
</organism>
<protein>
    <recommendedName>
        <fullName>Probable ABC transporter-binding protein DR_1571</fullName>
    </recommendedName>
</protein>